<organism>
    <name type="scientific">Rhipicephalus microplus</name>
    <name type="common">Cattle tick</name>
    <name type="synonym">Boophilus microplus</name>
    <dbReference type="NCBI Taxonomy" id="6941"/>
    <lineage>
        <taxon>Eukaryota</taxon>
        <taxon>Metazoa</taxon>
        <taxon>Ecdysozoa</taxon>
        <taxon>Arthropoda</taxon>
        <taxon>Chelicerata</taxon>
        <taxon>Arachnida</taxon>
        <taxon>Acari</taxon>
        <taxon>Parasitiformes</taxon>
        <taxon>Ixodida</taxon>
        <taxon>Ixodoidea</taxon>
        <taxon>Ixodidae</taxon>
        <taxon>Rhipicephalinae</taxon>
        <taxon>Rhipicephalus</taxon>
        <taxon>Boophilus</taxon>
    </lineage>
</organism>
<sequence>EVHNFACLGKPDPGGCAHYIYRRYYYV</sequence>
<name>BMTI3_RHIMP</name>
<protein>
    <recommendedName>
        <fullName>Kunitz-type serine protease inhibitor 3</fullName>
        <shortName>BmTI-3</shortName>
    </recommendedName>
</protein>
<keyword id="KW-0903">Direct protein sequencing</keyword>
<keyword id="KW-0646">Protease inhibitor</keyword>
<keyword id="KW-0964">Secreted</keyword>
<keyword id="KW-0722">Serine protease inhibitor</keyword>
<feature type="chain" id="PRO_0000155452" description="Kunitz-type serine protease inhibitor 3">
    <location>
        <begin position="1"/>
        <end position="27" status="greater than"/>
    </location>
</feature>
<feature type="domain" description="BPTI/Kunitz inhibitor" evidence="1">
    <location>
        <begin position="1"/>
        <end position="27" status="greater than"/>
    </location>
</feature>
<feature type="non-terminal residue">
    <location>
        <position position="27"/>
    </location>
</feature>
<accession>P83604</accession>
<evidence type="ECO:0000255" key="1">
    <source>
        <dbReference type="PROSITE-ProRule" id="PRU00031"/>
    </source>
</evidence>
<evidence type="ECO:0000269" key="2">
    <source>
    </source>
</evidence>
<dbReference type="GO" id="GO:0005576">
    <property type="term" value="C:extracellular region"/>
    <property type="evidence" value="ECO:0007669"/>
    <property type="project" value="UniProtKB-SubCell"/>
</dbReference>
<dbReference type="GO" id="GO:0004867">
    <property type="term" value="F:serine-type endopeptidase inhibitor activity"/>
    <property type="evidence" value="ECO:0007669"/>
    <property type="project" value="UniProtKB-KW"/>
</dbReference>
<comment type="function">
    <text evidence="2">Inhibits bovine trypsin and human neutrophil elastase.</text>
</comment>
<comment type="subcellular location">
    <subcellularLocation>
        <location>Secreted</location>
    </subcellularLocation>
</comment>
<reference key="1">
    <citation type="journal article" date="2004" name="Biochimie">
        <title>Boophilus microplus tick larvae, a rich source of Kunitz type serine proteinase inhibitors.</title>
        <authorList>
            <person name="Sasaki S.D."/>
            <person name="Azzolini S.S."/>
            <person name="Hirata I.Y."/>
            <person name="Andreotti R."/>
            <person name="Tanaka A.S."/>
        </authorList>
    </citation>
    <scope>PROTEIN SEQUENCE</scope>
    <scope>FUNCTION</scope>
    <source>
        <tissue>Larva</tissue>
    </source>
</reference>
<proteinExistence type="evidence at protein level"/>